<accession>Q1MS56</accession>
<sequence>MLPKIALVGRPNVGKSTLFNRLIRKNRAITHDRPGVTRDRMEGLVQSIGHPSFILIDTGGVILDSHYSTINIIDELHGFEKDIFQQVQLAIEESQAICLIVNARDGLLPFDEHLALFLRKTGKPILLAVNKVDGIEKEDQIVAEFHILGLPMIAVSAEHGHNIRQLENELSLLLPNNENIKDQSTAQAALKLAIIGRPNAGKSSIINAIIGKNKLIVSNIAGTTRDSIDIPFIFNKTQYLFVDTAGIRRRTKITDPVERFSVNASIKSATKANITLYVIDATEGITAQDKRLLDLLDTRKIPFILLINKTDLIAKKQKTLLSKSFKEELQFCPHIPILMVSAVTSSGLDQIIAMAEQVYLECSTRINTGVLNRAMEEIITRHQPPVVRRIRPKFFYLTQAETSPPTFVFFVNDAEKISETYVRYLERSLRKIFNLHHAPIRIRLRSSHKKRNQ</sequence>
<evidence type="ECO:0000255" key="1">
    <source>
        <dbReference type="HAMAP-Rule" id="MF_00195"/>
    </source>
</evidence>
<keyword id="KW-0342">GTP-binding</keyword>
<keyword id="KW-0547">Nucleotide-binding</keyword>
<keyword id="KW-1185">Reference proteome</keyword>
<keyword id="KW-0677">Repeat</keyword>
<keyword id="KW-0690">Ribosome biogenesis</keyword>
<gene>
    <name evidence="1" type="primary">der</name>
    <name type="synonym">engA</name>
    <name type="ordered locus">LI0113</name>
</gene>
<dbReference type="EMBL" id="AM180252">
    <property type="protein sequence ID" value="CAJ54169.1"/>
    <property type="molecule type" value="Genomic_DNA"/>
</dbReference>
<dbReference type="RefSeq" id="WP_011526196.1">
    <property type="nucleotide sequence ID" value="NC_008011.1"/>
</dbReference>
<dbReference type="SMR" id="Q1MS56"/>
<dbReference type="STRING" id="363253.LI0113"/>
<dbReference type="KEGG" id="lip:LI0113"/>
<dbReference type="eggNOG" id="COG1160">
    <property type="taxonomic scope" value="Bacteria"/>
</dbReference>
<dbReference type="HOGENOM" id="CLU_016077_6_2_7"/>
<dbReference type="OrthoDB" id="9805918at2"/>
<dbReference type="Proteomes" id="UP000002430">
    <property type="component" value="Chromosome"/>
</dbReference>
<dbReference type="GO" id="GO:0005525">
    <property type="term" value="F:GTP binding"/>
    <property type="evidence" value="ECO:0007669"/>
    <property type="project" value="UniProtKB-UniRule"/>
</dbReference>
<dbReference type="GO" id="GO:0043022">
    <property type="term" value="F:ribosome binding"/>
    <property type="evidence" value="ECO:0007669"/>
    <property type="project" value="TreeGrafter"/>
</dbReference>
<dbReference type="GO" id="GO:0042254">
    <property type="term" value="P:ribosome biogenesis"/>
    <property type="evidence" value="ECO:0007669"/>
    <property type="project" value="UniProtKB-KW"/>
</dbReference>
<dbReference type="CDD" id="cd01894">
    <property type="entry name" value="EngA1"/>
    <property type="match status" value="1"/>
</dbReference>
<dbReference type="CDD" id="cd01895">
    <property type="entry name" value="EngA2"/>
    <property type="match status" value="1"/>
</dbReference>
<dbReference type="FunFam" id="3.30.300.20:FF:000004">
    <property type="entry name" value="GTPase Der"/>
    <property type="match status" value="1"/>
</dbReference>
<dbReference type="FunFam" id="3.40.50.300:FF:000494">
    <property type="entry name" value="tRNA modification GTPase MnmE"/>
    <property type="match status" value="1"/>
</dbReference>
<dbReference type="Gene3D" id="3.30.300.20">
    <property type="match status" value="1"/>
</dbReference>
<dbReference type="Gene3D" id="3.40.50.300">
    <property type="entry name" value="P-loop containing nucleotide triphosphate hydrolases"/>
    <property type="match status" value="2"/>
</dbReference>
<dbReference type="HAMAP" id="MF_00195">
    <property type="entry name" value="GTPase_Der"/>
    <property type="match status" value="1"/>
</dbReference>
<dbReference type="InterPro" id="IPR031166">
    <property type="entry name" value="G_ENGA"/>
</dbReference>
<dbReference type="InterPro" id="IPR006073">
    <property type="entry name" value="GTP-bd"/>
</dbReference>
<dbReference type="InterPro" id="IPR016484">
    <property type="entry name" value="GTPase_Der"/>
</dbReference>
<dbReference type="InterPro" id="IPR032859">
    <property type="entry name" value="KH_dom-like"/>
</dbReference>
<dbReference type="InterPro" id="IPR015946">
    <property type="entry name" value="KH_dom-like_a/b"/>
</dbReference>
<dbReference type="InterPro" id="IPR027417">
    <property type="entry name" value="P-loop_NTPase"/>
</dbReference>
<dbReference type="InterPro" id="IPR005225">
    <property type="entry name" value="Small_GTP-bd"/>
</dbReference>
<dbReference type="NCBIfam" id="TIGR03594">
    <property type="entry name" value="GTPase_EngA"/>
    <property type="match status" value="1"/>
</dbReference>
<dbReference type="NCBIfam" id="TIGR00231">
    <property type="entry name" value="small_GTP"/>
    <property type="match status" value="2"/>
</dbReference>
<dbReference type="PANTHER" id="PTHR43834">
    <property type="entry name" value="GTPASE DER"/>
    <property type="match status" value="1"/>
</dbReference>
<dbReference type="PANTHER" id="PTHR43834:SF6">
    <property type="entry name" value="GTPASE DER"/>
    <property type="match status" value="1"/>
</dbReference>
<dbReference type="Pfam" id="PF14714">
    <property type="entry name" value="KH_dom-like"/>
    <property type="match status" value="1"/>
</dbReference>
<dbReference type="Pfam" id="PF01926">
    <property type="entry name" value="MMR_HSR1"/>
    <property type="match status" value="2"/>
</dbReference>
<dbReference type="PIRSF" id="PIRSF006485">
    <property type="entry name" value="GTP-binding_EngA"/>
    <property type="match status" value="1"/>
</dbReference>
<dbReference type="SUPFAM" id="SSF52540">
    <property type="entry name" value="P-loop containing nucleoside triphosphate hydrolases"/>
    <property type="match status" value="2"/>
</dbReference>
<dbReference type="PROSITE" id="PS51712">
    <property type="entry name" value="G_ENGA"/>
    <property type="match status" value="2"/>
</dbReference>
<feature type="chain" id="PRO_1000011653" description="GTPase Der">
    <location>
        <begin position="1"/>
        <end position="453"/>
    </location>
</feature>
<feature type="domain" description="EngA-type G 1">
    <location>
        <begin position="3"/>
        <end position="178"/>
    </location>
</feature>
<feature type="domain" description="EngA-type G 2">
    <location>
        <begin position="190"/>
        <end position="363"/>
    </location>
</feature>
<feature type="domain" description="KH-like" evidence="1">
    <location>
        <begin position="364"/>
        <end position="448"/>
    </location>
</feature>
<feature type="binding site" evidence="1">
    <location>
        <begin position="9"/>
        <end position="16"/>
    </location>
    <ligand>
        <name>GTP</name>
        <dbReference type="ChEBI" id="CHEBI:37565"/>
        <label>1</label>
    </ligand>
</feature>
<feature type="binding site" evidence="1">
    <location>
        <begin position="57"/>
        <end position="61"/>
    </location>
    <ligand>
        <name>GTP</name>
        <dbReference type="ChEBI" id="CHEBI:37565"/>
        <label>1</label>
    </ligand>
</feature>
<feature type="binding site" evidence="1">
    <location>
        <begin position="130"/>
        <end position="133"/>
    </location>
    <ligand>
        <name>GTP</name>
        <dbReference type="ChEBI" id="CHEBI:37565"/>
        <label>1</label>
    </ligand>
</feature>
<feature type="binding site" evidence="1">
    <location>
        <begin position="196"/>
        <end position="203"/>
    </location>
    <ligand>
        <name>GTP</name>
        <dbReference type="ChEBI" id="CHEBI:37565"/>
        <label>2</label>
    </ligand>
</feature>
<feature type="binding site" evidence="1">
    <location>
        <begin position="243"/>
        <end position="247"/>
    </location>
    <ligand>
        <name>GTP</name>
        <dbReference type="ChEBI" id="CHEBI:37565"/>
        <label>2</label>
    </ligand>
</feature>
<feature type="binding site" evidence="1">
    <location>
        <begin position="308"/>
        <end position="311"/>
    </location>
    <ligand>
        <name>GTP</name>
        <dbReference type="ChEBI" id="CHEBI:37565"/>
        <label>2</label>
    </ligand>
</feature>
<comment type="function">
    <text evidence="1">GTPase that plays an essential role in the late steps of ribosome biogenesis.</text>
</comment>
<comment type="subunit">
    <text evidence="1">Associates with the 50S ribosomal subunit.</text>
</comment>
<comment type="similarity">
    <text evidence="1">Belongs to the TRAFAC class TrmE-Era-EngA-EngB-Septin-like GTPase superfamily. EngA (Der) GTPase family.</text>
</comment>
<protein>
    <recommendedName>
        <fullName evidence="1">GTPase Der</fullName>
    </recommendedName>
    <alternativeName>
        <fullName evidence="1">GTP-binding protein EngA</fullName>
    </alternativeName>
</protein>
<organism>
    <name type="scientific">Lawsonia intracellularis (strain PHE/MN1-00)</name>
    <dbReference type="NCBI Taxonomy" id="363253"/>
    <lineage>
        <taxon>Bacteria</taxon>
        <taxon>Pseudomonadati</taxon>
        <taxon>Thermodesulfobacteriota</taxon>
        <taxon>Desulfovibrionia</taxon>
        <taxon>Desulfovibrionales</taxon>
        <taxon>Desulfovibrionaceae</taxon>
        <taxon>Lawsonia</taxon>
    </lineage>
</organism>
<proteinExistence type="inferred from homology"/>
<reference key="1">
    <citation type="submission" date="2005-11" db="EMBL/GenBank/DDBJ databases">
        <title>The complete genome sequence of Lawsonia intracellularis: the causative agent of proliferative enteropathy.</title>
        <authorList>
            <person name="Kaur K."/>
            <person name="Zhang Q."/>
            <person name="Beckler D."/>
            <person name="Munir S."/>
            <person name="Li L."/>
            <person name="Kinsley K."/>
            <person name="Herron L."/>
            <person name="Peterson A."/>
            <person name="May B."/>
            <person name="Singh S."/>
            <person name="Gebhart C."/>
            <person name="Kapur V."/>
        </authorList>
    </citation>
    <scope>NUCLEOTIDE SEQUENCE [LARGE SCALE GENOMIC DNA]</scope>
    <source>
        <strain>PHE/MN1-00</strain>
    </source>
</reference>
<name>DER_LAWIP</name>